<sequence length="778" mass="87678">MNNKIIETLEFHKVRQKIEPYLLTEQGFEELRQLEPMVEVHRIQQAFDELTDIAQIFVENPYFSLAATSDIGPAMRRLELDTDLNIAELLAVKKVLEVSKSLLDFYGNLENVSLSQQLDKLFEKIELFPHLQGSLQSINDAGFVEDFASEKLARIRRKIREAEDQVRQVMQDILKTKGDMLSDSILASRNGRNVLPVKNTYRNKIAGVVHDISASGSTVYIEPRAVVTLNEEISHLRAEERHELNRILQELSDMLRPHGGVIRNNAWLIGHIDFVRAKHLFARDHQAVVPKLSEKQDIALLNVRHPLIAKPVPNDLYFGSQLTAIVITGPNTGGKTIMLKTLGLTHLMAQSGLPILADKGSRVAIFKEIFADIGDEQSIEQSLSTFSSHMTHTVEILRAADQDSLILFDELGAGTDPQEGASLAMAILDDLRLRGIKTMATTHYPELKAYGIETSGIENASMEFDSNSLRPTYKFMQGVPGRSNAFEIARRLGLSDIIIQSAQSWTDTDSDVNRIIEKLESQTVESRQRLDKIRDVEQENYKMNRALRKLYDELNRERENELNKARLEAKEIVDMALAESEDILKNLHAAASLKPHQIIEAKAELKKLAPEVVDLSKNKVLKKAKIKREAKVGDDIIVTAYGQRGTLTNQLKDGRWEAQVGLIKMTLAKDEFELVKAEKAEQPKKRQVHTVKRANVRGPKARLDLRGKRYEEAMMELDEFIDQALLNNLAQVDIVHGIGTGVIREGVTKYLRRNKQIKEFGYAPQNAGGSGCTIVTFK</sequence>
<name>MUTS2_STRSY</name>
<gene>
    <name evidence="1" type="primary">mutS2</name>
    <name evidence="1" type="synonym">rqcU</name>
    <name type="ordered locus">SSU05_0235</name>
</gene>
<comment type="function">
    <text evidence="1">Endonuclease that is involved in the suppression of homologous recombination and thus may have a key role in the control of bacterial genetic diversity.</text>
</comment>
<comment type="function">
    <text evidence="1">Acts as a ribosome collision sensor, splitting the ribosome into its 2 subunits. Detects stalled/collided 70S ribosomes which it binds and splits by an ATP-hydrolysis driven conformational change. Acts upstream of the ribosome quality control system (RQC), a ribosome-associated complex that mediates the extraction of incompletely synthesized nascent chains from stalled ribosomes and their subsequent degradation. Probably generates substrates for RQC.</text>
</comment>
<comment type="subunit">
    <text evidence="1">Homodimer. Binds to stalled ribosomes, contacting rRNA.</text>
</comment>
<comment type="similarity">
    <text evidence="1">Belongs to the DNA mismatch repair MutS family. MutS2 subfamily.</text>
</comment>
<evidence type="ECO:0000255" key="1">
    <source>
        <dbReference type="HAMAP-Rule" id="MF_00092"/>
    </source>
</evidence>
<keyword id="KW-0067">ATP-binding</keyword>
<keyword id="KW-0238">DNA-binding</keyword>
<keyword id="KW-0255">Endonuclease</keyword>
<keyword id="KW-0378">Hydrolase</keyword>
<keyword id="KW-0540">Nuclease</keyword>
<keyword id="KW-0547">Nucleotide-binding</keyword>
<keyword id="KW-0694">RNA-binding</keyword>
<keyword id="KW-0699">rRNA-binding</keyword>
<organism>
    <name type="scientific">Streptococcus suis (strain 05ZYH33)</name>
    <dbReference type="NCBI Taxonomy" id="391295"/>
    <lineage>
        <taxon>Bacteria</taxon>
        <taxon>Bacillati</taxon>
        <taxon>Bacillota</taxon>
        <taxon>Bacilli</taxon>
        <taxon>Lactobacillales</taxon>
        <taxon>Streptococcaceae</taxon>
        <taxon>Streptococcus</taxon>
    </lineage>
</organism>
<protein>
    <recommendedName>
        <fullName evidence="1">Endonuclease MutS2</fullName>
        <ecNumber evidence="1">3.1.-.-</ecNumber>
    </recommendedName>
    <alternativeName>
        <fullName evidence="1">Ribosome-associated protein quality control-upstream factor</fullName>
        <shortName evidence="1">RQC-upstream factor</shortName>
        <shortName evidence="1">RqcU</shortName>
        <ecNumber evidence="1">3.6.4.-</ecNumber>
    </alternativeName>
</protein>
<proteinExistence type="inferred from homology"/>
<accession>A4VSW4</accession>
<reference key="1">
    <citation type="journal article" date="2007" name="PLoS ONE">
        <title>A glimpse of streptococcal toxic shock syndrome from comparative genomics of S. suis 2 Chinese isolates.</title>
        <authorList>
            <person name="Chen C."/>
            <person name="Tang J."/>
            <person name="Dong W."/>
            <person name="Wang C."/>
            <person name="Feng Y."/>
            <person name="Wang J."/>
            <person name="Zheng F."/>
            <person name="Pan X."/>
            <person name="Liu D."/>
            <person name="Li M."/>
            <person name="Song Y."/>
            <person name="Zhu X."/>
            <person name="Sun H."/>
            <person name="Feng T."/>
            <person name="Guo Z."/>
            <person name="Ju A."/>
            <person name="Ge J."/>
            <person name="Dong Y."/>
            <person name="Sun W."/>
            <person name="Jiang Y."/>
            <person name="Wang J."/>
            <person name="Yan J."/>
            <person name="Yang H."/>
            <person name="Wang X."/>
            <person name="Gao G.F."/>
            <person name="Yang R."/>
            <person name="Wang J."/>
            <person name="Yu J."/>
        </authorList>
    </citation>
    <scope>NUCLEOTIDE SEQUENCE [LARGE SCALE GENOMIC DNA]</scope>
    <source>
        <strain>05ZYH33</strain>
    </source>
</reference>
<dbReference type="EC" id="3.1.-.-" evidence="1"/>
<dbReference type="EC" id="3.6.4.-" evidence="1"/>
<dbReference type="EMBL" id="CP000407">
    <property type="protein sequence ID" value="ABP89203.1"/>
    <property type="molecule type" value="Genomic_DNA"/>
</dbReference>
<dbReference type="SMR" id="A4VSW4"/>
<dbReference type="STRING" id="391295.SSU05_0235"/>
<dbReference type="KEGG" id="ssu:SSU05_0235"/>
<dbReference type="eggNOG" id="COG1193">
    <property type="taxonomic scope" value="Bacteria"/>
</dbReference>
<dbReference type="HOGENOM" id="CLU_011252_2_1_9"/>
<dbReference type="GO" id="GO:0005524">
    <property type="term" value="F:ATP binding"/>
    <property type="evidence" value="ECO:0007669"/>
    <property type="project" value="UniProtKB-UniRule"/>
</dbReference>
<dbReference type="GO" id="GO:0016887">
    <property type="term" value="F:ATP hydrolysis activity"/>
    <property type="evidence" value="ECO:0007669"/>
    <property type="project" value="InterPro"/>
</dbReference>
<dbReference type="GO" id="GO:0140664">
    <property type="term" value="F:ATP-dependent DNA damage sensor activity"/>
    <property type="evidence" value="ECO:0007669"/>
    <property type="project" value="InterPro"/>
</dbReference>
<dbReference type="GO" id="GO:0004519">
    <property type="term" value="F:endonuclease activity"/>
    <property type="evidence" value="ECO:0007669"/>
    <property type="project" value="UniProtKB-UniRule"/>
</dbReference>
<dbReference type="GO" id="GO:0030983">
    <property type="term" value="F:mismatched DNA binding"/>
    <property type="evidence" value="ECO:0007669"/>
    <property type="project" value="InterPro"/>
</dbReference>
<dbReference type="GO" id="GO:0043023">
    <property type="term" value="F:ribosomal large subunit binding"/>
    <property type="evidence" value="ECO:0007669"/>
    <property type="project" value="UniProtKB-UniRule"/>
</dbReference>
<dbReference type="GO" id="GO:0019843">
    <property type="term" value="F:rRNA binding"/>
    <property type="evidence" value="ECO:0007669"/>
    <property type="project" value="UniProtKB-UniRule"/>
</dbReference>
<dbReference type="GO" id="GO:0006298">
    <property type="term" value="P:mismatch repair"/>
    <property type="evidence" value="ECO:0007669"/>
    <property type="project" value="InterPro"/>
</dbReference>
<dbReference type="GO" id="GO:0045910">
    <property type="term" value="P:negative regulation of DNA recombination"/>
    <property type="evidence" value="ECO:0007669"/>
    <property type="project" value="InterPro"/>
</dbReference>
<dbReference type="GO" id="GO:0072344">
    <property type="term" value="P:rescue of stalled ribosome"/>
    <property type="evidence" value="ECO:0007669"/>
    <property type="project" value="UniProtKB-UniRule"/>
</dbReference>
<dbReference type="CDD" id="cd03280">
    <property type="entry name" value="ABC_MutS2"/>
    <property type="match status" value="1"/>
</dbReference>
<dbReference type="FunFam" id="3.40.50.300:FF:000830">
    <property type="entry name" value="Endonuclease MutS2"/>
    <property type="match status" value="1"/>
</dbReference>
<dbReference type="Gene3D" id="3.30.1370.110">
    <property type="match status" value="1"/>
</dbReference>
<dbReference type="Gene3D" id="3.40.50.300">
    <property type="entry name" value="P-loop containing nucleotide triphosphate hydrolases"/>
    <property type="match status" value="1"/>
</dbReference>
<dbReference type="HAMAP" id="MF_00092">
    <property type="entry name" value="MutS2"/>
    <property type="match status" value="1"/>
</dbReference>
<dbReference type="InterPro" id="IPR000432">
    <property type="entry name" value="DNA_mismatch_repair_MutS_C"/>
</dbReference>
<dbReference type="InterPro" id="IPR007696">
    <property type="entry name" value="DNA_mismatch_repair_MutS_core"/>
</dbReference>
<dbReference type="InterPro" id="IPR036187">
    <property type="entry name" value="DNA_mismatch_repair_MutS_sf"/>
</dbReference>
<dbReference type="InterPro" id="IPR046893">
    <property type="entry name" value="MSSS"/>
</dbReference>
<dbReference type="InterPro" id="IPR045076">
    <property type="entry name" value="MutS"/>
</dbReference>
<dbReference type="InterPro" id="IPR005747">
    <property type="entry name" value="MutS2"/>
</dbReference>
<dbReference type="InterPro" id="IPR027417">
    <property type="entry name" value="P-loop_NTPase"/>
</dbReference>
<dbReference type="InterPro" id="IPR002625">
    <property type="entry name" value="Smr_dom"/>
</dbReference>
<dbReference type="InterPro" id="IPR036063">
    <property type="entry name" value="Smr_dom_sf"/>
</dbReference>
<dbReference type="NCBIfam" id="TIGR01069">
    <property type="entry name" value="mutS2"/>
    <property type="match status" value="1"/>
</dbReference>
<dbReference type="PANTHER" id="PTHR48466">
    <property type="entry name" value="OS10G0509000 PROTEIN-RELATED"/>
    <property type="match status" value="1"/>
</dbReference>
<dbReference type="PANTHER" id="PTHR48466:SF1">
    <property type="entry name" value="SMR DOMAIN-CONTAINING PROTEIN"/>
    <property type="match status" value="1"/>
</dbReference>
<dbReference type="Pfam" id="PF20297">
    <property type="entry name" value="MSSS"/>
    <property type="match status" value="1"/>
</dbReference>
<dbReference type="Pfam" id="PF00488">
    <property type="entry name" value="MutS_V"/>
    <property type="match status" value="1"/>
</dbReference>
<dbReference type="Pfam" id="PF01713">
    <property type="entry name" value="Smr"/>
    <property type="match status" value="1"/>
</dbReference>
<dbReference type="PIRSF" id="PIRSF005814">
    <property type="entry name" value="MutS_YshD"/>
    <property type="match status" value="1"/>
</dbReference>
<dbReference type="SMART" id="SM00534">
    <property type="entry name" value="MUTSac"/>
    <property type="match status" value="1"/>
</dbReference>
<dbReference type="SMART" id="SM00533">
    <property type="entry name" value="MUTSd"/>
    <property type="match status" value="1"/>
</dbReference>
<dbReference type="SMART" id="SM00463">
    <property type="entry name" value="SMR"/>
    <property type="match status" value="1"/>
</dbReference>
<dbReference type="SUPFAM" id="SSF48334">
    <property type="entry name" value="DNA repair protein MutS, domain III"/>
    <property type="match status" value="1"/>
</dbReference>
<dbReference type="SUPFAM" id="SSF52540">
    <property type="entry name" value="P-loop containing nucleoside triphosphate hydrolases"/>
    <property type="match status" value="1"/>
</dbReference>
<dbReference type="SUPFAM" id="SSF160443">
    <property type="entry name" value="SMR domain-like"/>
    <property type="match status" value="1"/>
</dbReference>
<dbReference type="PROSITE" id="PS00486">
    <property type="entry name" value="DNA_MISMATCH_REPAIR_2"/>
    <property type="match status" value="1"/>
</dbReference>
<dbReference type="PROSITE" id="PS50828">
    <property type="entry name" value="SMR"/>
    <property type="match status" value="1"/>
</dbReference>
<feature type="chain" id="PRO_1000093404" description="Endonuclease MutS2">
    <location>
        <begin position="1"/>
        <end position="778"/>
    </location>
</feature>
<feature type="domain" description="Smr" evidence="1">
    <location>
        <begin position="703"/>
        <end position="778"/>
    </location>
</feature>
<feature type="binding site" evidence="1">
    <location>
        <begin position="329"/>
        <end position="336"/>
    </location>
    <ligand>
        <name>ATP</name>
        <dbReference type="ChEBI" id="CHEBI:30616"/>
    </ligand>
</feature>